<comment type="subcellular location">
    <subcellularLocation>
        <location evidence="2">Cell inner membrane</location>
        <topology evidence="2">Multi-pass membrane protein</topology>
    </subcellularLocation>
</comment>
<comment type="similarity">
    <text evidence="2">Belongs to the ExbB/TolQ family.</text>
</comment>
<accession>Q9ZK83</accession>
<organism>
    <name type="scientific">Helicobacter pylori (strain J99 / ATCC 700824)</name>
    <name type="common">Campylobacter pylori J99</name>
    <dbReference type="NCBI Taxonomy" id="85963"/>
    <lineage>
        <taxon>Bacteria</taxon>
        <taxon>Pseudomonadati</taxon>
        <taxon>Campylobacterota</taxon>
        <taxon>Epsilonproteobacteria</taxon>
        <taxon>Campylobacterales</taxon>
        <taxon>Helicobacteraceae</taxon>
        <taxon>Helicobacter</taxon>
    </lineage>
</organism>
<reference key="1">
    <citation type="journal article" date="1999" name="Nature">
        <title>Genomic sequence comparison of two unrelated isolates of the human gastric pathogen Helicobacter pylori.</title>
        <authorList>
            <person name="Alm R.A."/>
            <person name="Ling L.-S.L."/>
            <person name="Moir D.T."/>
            <person name="King B.L."/>
            <person name="Brown E.D."/>
            <person name="Doig P.C."/>
            <person name="Smith D.R."/>
            <person name="Noonan B."/>
            <person name="Guild B.C."/>
            <person name="deJonge B.L."/>
            <person name="Carmel G."/>
            <person name="Tummino P.J."/>
            <person name="Caruso A."/>
            <person name="Uria-Nickelsen M."/>
            <person name="Mills D.M."/>
            <person name="Ives C."/>
            <person name="Gibson R."/>
            <person name="Merberg D."/>
            <person name="Mills S.D."/>
            <person name="Jiang Q."/>
            <person name="Taylor D.E."/>
            <person name="Vovis G.F."/>
            <person name="Trust T.J."/>
        </authorList>
    </citation>
    <scope>NUCLEOTIDE SEQUENCE [LARGE SCALE GENOMIC DNA]</scope>
    <source>
        <strain>J99 / ATCC 700824</strain>
    </source>
</reference>
<keyword id="KW-0997">Cell inner membrane</keyword>
<keyword id="KW-1003">Cell membrane</keyword>
<keyword id="KW-0472">Membrane</keyword>
<keyword id="KW-0653">Protein transport</keyword>
<keyword id="KW-0812">Transmembrane</keyword>
<keyword id="KW-1133">Transmembrane helix</keyword>
<keyword id="KW-0813">Transport</keyword>
<dbReference type="EMBL" id="AE001439">
    <property type="protein sequence ID" value="AAD06637.1"/>
    <property type="molecule type" value="Genomic_DNA"/>
</dbReference>
<dbReference type="PIR" id="B71855">
    <property type="entry name" value="B71855"/>
</dbReference>
<dbReference type="RefSeq" id="WP_000460425.1">
    <property type="nucleotide sequence ID" value="NZ_CP011330.1"/>
</dbReference>
<dbReference type="SMR" id="Q9ZK83"/>
<dbReference type="KEGG" id="hpj:jhp_1058"/>
<dbReference type="PATRIC" id="fig|85963.30.peg.1530"/>
<dbReference type="eggNOG" id="COG0811">
    <property type="taxonomic scope" value="Bacteria"/>
</dbReference>
<dbReference type="Proteomes" id="UP000000804">
    <property type="component" value="Chromosome"/>
</dbReference>
<dbReference type="GO" id="GO:0005886">
    <property type="term" value="C:plasma membrane"/>
    <property type="evidence" value="ECO:0007669"/>
    <property type="project" value="UniProtKB-SubCell"/>
</dbReference>
<dbReference type="GO" id="GO:0017038">
    <property type="term" value="P:protein import"/>
    <property type="evidence" value="ECO:0007669"/>
    <property type="project" value="TreeGrafter"/>
</dbReference>
<dbReference type="InterPro" id="IPR017269">
    <property type="entry name" value="Biopolymer_transpt_ExbB-like_1"/>
</dbReference>
<dbReference type="InterPro" id="IPR050790">
    <property type="entry name" value="ExbB/TolQ_transport"/>
</dbReference>
<dbReference type="InterPro" id="IPR002898">
    <property type="entry name" value="MotA_ExbB_proton_chnl"/>
</dbReference>
<dbReference type="PANTHER" id="PTHR30625:SF15">
    <property type="entry name" value="BIOPOLYMER TRANSPORT PROTEIN EXBB"/>
    <property type="match status" value="1"/>
</dbReference>
<dbReference type="PANTHER" id="PTHR30625">
    <property type="entry name" value="PROTEIN TOLQ"/>
    <property type="match status" value="1"/>
</dbReference>
<dbReference type="Pfam" id="PF01618">
    <property type="entry name" value="MotA_ExbB"/>
    <property type="match status" value="1"/>
</dbReference>
<dbReference type="PIRSF" id="PIRSF037713">
    <property type="entry name" value="Biopolymer_transpt_exbB-like"/>
    <property type="match status" value="1"/>
</dbReference>
<protein>
    <recommendedName>
        <fullName>Putative biopolymer transport protein ExbB-like 1</fullName>
    </recommendedName>
</protein>
<evidence type="ECO:0000255" key="1"/>
<evidence type="ECO:0000305" key="2"/>
<sequence length="189" mass="21239">MFDSIVYFFNKSGFVTTLVLVWISLYLVMTLWVFLYKSIVLKIELRREMQSLSNILNGAQDAPEHFMFNKKRNDETKRYSNELLQAWKHQVLKQSTTGLVVLSIISSTAPFIGLFGTVVEILEAFNNLGALGQASFGVIAPIISKALIATAAGILAAIPAYSFYLILKRKVYDLSVYVQMQVDILSSKK</sequence>
<name>EXBL1_HELPJ</name>
<gene>
    <name type="ordered locus">jhp_1058</name>
</gene>
<proteinExistence type="inferred from homology"/>
<feature type="chain" id="PRO_0000145816" description="Putative biopolymer transport protein ExbB-like 1">
    <location>
        <begin position="1"/>
        <end position="189"/>
    </location>
</feature>
<feature type="transmembrane region" description="Helical" evidence="1">
    <location>
        <begin position="14"/>
        <end position="34"/>
    </location>
</feature>
<feature type="transmembrane region" description="Helical" evidence="1">
    <location>
        <begin position="99"/>
        <end position="119"/>
    </location>
</feature>
<feature type="transmembrane region" description="Helical" evidence="1">
    <location>
        <begin position="147"/>
        <end position="167"/>
    </location>
</feature>